<proteinExistence type="inferred from homology"/>
<feature type="chain" id="PRO_1000121127" description="DNA replication and repair protein RecF">
    <location>
        <begin position="1"/>
        <end position="373"/>
    </location>
</feature>
<feature type="binding site" evidence="1">
    <location>
        <begin position="30"/>
        <end position="37"/>
    </location>
    <ligand>
        <name>ATP</name>
        <dbReference type="ChEBI" id="CHEBI:30616"/>
    </ligand>
</feature>
<keyword id="KW-0067">ATP-binding</keyword>
<keyword id="KW-0963">Cytoplasm</keyword>
<keyword id="KW-0227">DNA damage</keyword>
<keyword id="KW-0234">DNA repair</keyword>
<keyword id="KW-0235">DNA replication</keyword>
<keyword id="KW-0238">DNA-binding</keyword>
<keyword id="KW-0547">Nucleotide-binding</keyword>
<keyword id="KW-1185">Reference proteome</keyword>
<keyword id="KW-0742">SOS response</keyword>
<accession>B2GEV1</accession>
<reference key="1">
    <citation type="journal article" date="2008" name="DNA Res.">
        <title>Comparative genome analysis of Lactobacillus reuteri and Lactobacillus fermentum reveal a genomic island for reuterin and cobalamin production.</title>
        <authorList>
            <person name="Morita H."/>
            <person name="Toh H."/>
            <person name="Fukuda S."/>
            <person name="Horikawa H."/>
            <person name="Oshima K."/>
            <person name="Suzuki T."/>
            <person name="Murakami M."/>
            <person name="Hisamatsu S."/>
            <person name="Kato Y."/>
            <person name="Takizawa T."/>
            <person name="Fukuoka H."/>
            <person name="Yoshimura T."/>
            <person name="Itoh K."/>
            <person name="O'Sullivan D.J."/>
            <person name="McKay L.L."/>
            <person name="Ohno H."/>
            <person name="Kikuchi J."/>
            <person name="Masaoka T."/>
            <person name="Hattori M."/>
        </authorList>
    </citation>
    <scope>NUCLEOTIDE SEQUENCE [LARGE SCALE GENOMIC DNA]</scope>
    <source>
        <strain>NBRC 3956 / LMG 18251</strain>
    </source>
</reference>
<protein>
    <recommendedName>
        <fullName evidence="1">DNA replication and repair protein RecF</fullName>
    </recommendedName>
</protein>
<sequence length="373" mass="42344">MILQELQLSHYRNYEELAVTFAPGINVLIGENAQGKTNLLEAIYLLAFTKSHRTAKDRELIGWHQKLARVSGVVERASGRLPLEVQISTSGKRVKVNHLFQKRLSTYVGNLNVVLFAPEDLALVKGAPVNRRQFMDMEFGQMSSKYLYNVSRFNQQLAQRNAYLRQFKYGQQSDRILLGVITDQLASVGGEVVVARQQLVKRLGKWAAELHHHISKQKEELSLQYVSQVEVDDQTTEEEAVAQLRRLYSENEEREIEHGTSLIGPQRDDIHFIVNGQNVQRFGSQGQQRTTALAVKLAEIDLMKEQTGEYPLLLLDDVLSELDDDRQTHLLTAIQDKVQTFITTTSLSGVARQLIHHPTIFTIQSGTLTKEEN</sequence>
<dbReference type="EMBL" id="AP008937">
    <property type="protein sequence ID" value="BAG26340.1"/>
    <property type="molecule type" value="Genomic_DNA"/>
</dbReference>
<dbReference type="RefSeq" id="WP_012390652.1">
    <property type="nucleotide sequence ID" value="NC_010610.1"/>
</dbReference>
<dbReference type="SMR" id="B2GEV1"/>
<dbReference type="KEGG" id="lfe:LAF_0004"/>
<dbReference type="PATRIC" id="fig|334390.5.peg.4"/>
<dbReference type="eggNOG" id="COG1195">
    <property type="taxonomic scope" value="Bacteria"/>
</dbReference>
<dbReference type="HOGENOM" id="CLU_040267_0_1_9"/>
<dbReference type="Proteomes" id="UP000001697">
    <property type="component" value="Chromosome"/>
</dbReference>
<dbReference type="GO" id="GO:0005737">
    <property type="term" value="C:cytoplasm"/>
    <property type="evidence" value="ECO:0007669"/>
    <property type="project" value="UniProtKB-SubCell"/>
</dbReference>
<dbReference type="GO" id="GO:0005524">
    <property type="term" value="F:ATP binding"/>
    <property type="evidence" value="ECO:0007669"/>
    <property type="project" value="UniProtKB-UniRule"/>
</dbReference>
<dbReference type="GO" id="GO:0003697">
    <property type="term" value="F:single-stranded DNA binding"/>
    <property type="evidence" value="ECO:0007669"/>
    <property type="project" value="UniProtKB-UniRule"/>
</dbReference>
<dbReference type="GO" id="GO:0006260">
    <property type="term" value="P:DNA replication"/>
    <property type="evidence" value="ECO:0007669"/>
    <property type="project" value="UniProtKB-UniRule"/>
</dbReference>
<dbReference type="GO" id="GO:0000731">
    <property type="term" value="P:DNA synthesis involved in DNA repair"/>
    <property type="evidence" value="ECO:0007669"/>
    <property type="project" value="TreeGrafter"/>
</dbReference>
<dbReference type="GO" id="GO:0006302">
    <property type="term" value="P:double-strand break repair"/>
    <property type="evidence" value="ECO:0007669"/>
    <property type="project" value="TreeGrafter"/>
</dbReference>
<dbReference type="GO" id="GO:0009432">
    <property type="term" value="P:SOS response"/>
    <property type="evidence" value="ECO:0007669"/>
    <property type="project" value="UniProtKB-UniRule"/>
</dbReference>
<dbReference type="CDD" id="cd03242">
    <property type="entry name" value="ABC_RecF"/>
    <property type="match status" value="1"/>
</dbReference>
<dbReference type="Gene3D" id="3.40.50.300">
    <property type="entry name" value="P-loop containing nucleotide triphosphate hydrolases"/>
    <property type="match status" value="1"/>
</dbReference>
<dbReference type="Gene3D" id="1.20.1050.90">
    <property type="entry name" value="RecF/RecN/SMC, N-terminal domain"/>
    <property type="match status" value="1"/>
</dbReference>
<dbReference type="HAMAP" id="MF_00365">
    <property type="entry name" value="RecF"/>
    <property type="match status" value="1"/>
</dbReference>
<dbReference type="InterPro" id="IPR001238">
    <property type="entry name" value="DNA-binding_RecF"/>
</dbReference>
<dbReference type="InterPro" id="IPR018078">
    <property type="entry name" value="DNA-binding_RecF_CS"/>
</dbReference>
<dbReference type="InterPro" id="IPR027417">
    <property type="entry name" value="P-loop_NTPase"/>
</dbReference>
<dbReference type="InterPro" id="IPR003395">
    <property type="entry name" value="RecF/RecN/SMC_N"/>
</dbReference>
<dbReference type="InterPro" id="IPR042174">
    <property type="entry name" value="RecF_2"/>
</dbReference>
<dbReference type="NCBIfam" id="TIGR00611">
    <property type="entry name" value="recf"/>
    <property type="match status" value="1"/>
</dbReference>
<dbReference type="PANTHER" id="PTHR32182">
    <property type="entry name" value="DNA REPLICATION AND REPAIR PROTEIN RECF"/>
    <property type="match status" value="1"/>
</dbReference>
<dbReference type="PANTHER" id="PTHR32182:SF0">
    <property type="entry name" value="DNA REPLICATION AND REPAIR PROTEIN RECF"/>
    <property type="match status" value="1"/>
</dbReference>
<dbReference type="Pfam" id="PF02463">
    <property type="entry name" value="SMC_N"/>
    <property type="match status" value="1"/>
</dbReference>
<dbReference type="SUPFAM" id="SSF52540">
    <property type="entry name" value="P-loop containing nucleoside triphosphate hydrolases"/>
    <property type="match status" value="1"/>
</dbReference>
<dbReference type="PROSITE" id="PS00617">
    <property type="entry name" value="RECF_1"/>
    <property type="match status" value="1"/>
</dbReference>
<dbReference type="PROSITE" id="PS00618">
    <property type="entry name" value="RECF_2"/>
    <property type="match status" value="1"/>
</dbReference>
<comment type="function">
    <text evidence="1">The RecF protein is involved in DNA metabolism; it is required for DNA replication and normal SOS inducibility. RecF binds preferentially to single-stranded, linear DNA. It also seems to bind ATP.</text>
</comment>
<comment type="subcellular location">
    <subcellularLocation>
        <location evidence="1">Cytoplasm</location>
    </subcellularLocation>
</comment>
<comment type="similarity">
    <text evidence="1">Belongs to the RecF family.</text>
</comment>
<evidence type="ECO:0000255" key="1">
    <source>
        <dbReference type="HAMAP-Rule" id="MF_00365"/>
    </source>
</evidence>
<name>RECF_LIMF3</name>
<gene>
    <name evidence="1" type="primary">recF</name>
    <name type="ordered locus">LAF_0004</name>
</gene>
<organism>
    <name type="scientific">Limosilactobacillus fermentum (strain NBRC 3956 / LMG 18251)</name>
    <name type="common">Lactobacillus fermentum</name>
    <dbReference type="NCBI Taxonomy" id="334390"/>
    <lineage>
        <taxon>Bacteria</taxon>
        <taxon>Bacillati</taxon>
        <taxon>Bacillota</taxon>
        <taxon>Bacilli</taxon>
        <taxon>Lactobacillales</taxon>
        <taxon>Lactobacillaceae</taxon>
        <taxon>Limosilactobacillus</taxon>
    </lineage>
</organism>